<protein>
    <recommendedName>
        <fullName evidence="1">UPF0235 protein TC_0667</fullName>
    </recommendedName>
</protein>
<name>Y667_CHLMU</name>
<reference key="1">
    <citation type="journal article" date="2000" name="Nucleic Acids Res.">
        <title>Genome sequences of Chlamydia trachomatis MoPn and Chlamydia pneumoniae AR39.</title>
        <authorList>
            <person name="Read T.D."/>
            <person name="Brunham R.C."/>
            <person name="Shen C."/>
            <person name="Gill S.R."/>
            <person name="Heidelberg J.F."/>
            <person name="White O."/>
            <person name="Hickey E.K."/>
            <person name="Peterson J.D."/>
            <person name="Utterback T.R."/>
            <person name="Berry K.J."/>
            <person name="Bass S."/>
            <person name="Linher K.D."/>
            <person name="Weidman J.F."/>
            <person name="Khouri H.M."/>
            <person name="Craven B."/>
            <person name="Bowman C."/>
            <person name="Dodson R.J."/>
            <person name="Gwinn M.L."/>
            <person name="Nelson W.C."/>
            <person name="DeBoy R.T."/>
            <person name="Kolonay J.F."/>
            <person name="McClarty G."/>
            <person name="Salzberg S.L."/>
            <person name="Eisen J.A."/>
            <person name="Fraser C.M."/>
        </authorList>
    </citation>
    <scope>NUCLEOTIDE SEQUENCE [LARGE SCALE GENOMIC DNA]</scope>
    <source>
        <strain>MoPn / Nigg</strain>
    </source>
</reference>
<accession>Q9PK06</accession>
<feature type="chain" id="PRO_0000139437" description="UPF0235 protein TC_0667">
    <location>
        <begin position="1"/>
        <end position="100"/>
    </location>
</feature>
<proteinExistence type="inferred from homology"/>
<sequence>MLEGFWVLEIRVTTKARENKVVSLEDGILRVRVTEAPERGKANDAVVALLAKFLSIPKNDVTLIAGEASRRKKVLLPRAIKAFLFEQFPQTSSPDAGKKC</sequence>
<evidence type="ECO:0000255" key="1">
    <source>
        <dbReference type="HAMAP-Rule" id="MF_00634"/>
    </source>
</evidence>
<comment type="similarity">
    <text evidence="1">Belongs to the UPF0235 family.</text>
</comment>
<dbReference type="EMBL" id="AE002160">
    <property type="protein sequence ID" value="AAF39489.1"/>
    <property type="molecule type" value="Genomic_DNA"/>
</dbReference>
<dbReference type="PIR" id="F81677">
    <property type="entry name" value="F81677"/>
</dbReference>
<dbReference type="RefSeq" id="WP_010231164.1">
    <property type="nucleotide sequence ID" value="NZ_CP063055.1"/>
</dbReference>
<dbReference type="SMR" id="Q9PK06"/>
<dbReference type="GeneID" id="1246028"/>
<dbReference type="KEGG" id="cmu:TC_0667"/>
<dbReference type="eggNOG" id="COG1872">
    <property type="taxonomic scope" value="Bacteria"/>
</dbReference>
<dbReference type="HOGENOM" id="CLU_130694_6_2_0"/>
<dbReference type="OrthoDB" id="9800587at2"/>
<dbReference type="Proteomes" id="UP000000800">
    <property type="component" value="Chromosome"/>
</dbReference>
<dbReference type="GO" id="GO:0005737">
    <property type="term" value="C:cytoplasm"/>
    <property type="evidence" value="ECO:0007669"/>
    <property type="project" value="TreeGrafter"/>
</dbReference>
<dbReference type="Gene3D" id="3.30.1200.10">
    <property type="entry name" value="YggU-like"/>
    <property type="match status" value="1"/>
</dbReference>
<dbReference type="HAMAP" id="MF_00634">
    <property type="entry name" value="UPF0235"/>
    <property type="match status" value="1"/>
</dbReference>
<dbReference type="InterPro" id="IPR003746">
    <property type="entry name" value="DUF167"/>
</dbReference>
<dbReference type="InterPro" id="IPR036591">
    <property type="entry name" value="YggU-like_sf"/>
</dbReference>
<dbReference type="NCBIfam" id="TIGR00251">
    <property type="entry name" value="DUF167 family protein"/>
    <property type="match status" value="1"/>
</dbReference>
<dbReference type="NCBIfam" id="NF001887">
    <property type="entry name" value="PRK00647.1"/>
    <property type="match status" value="1"/>
</dbReference>
<dbReference type="PANTHER" id="PTHR13420">
    <property type="entry name" value="UPF0235 PROTEIN C15ORF40"/>
    <property type="match status" value="1"/>
</dbReference>
<dbReference type="PANTHER" id="PTHR13420:SF7">
    <property type="entry name" value="UPF0235 PROTEIN C15ORF40"/>
    <property type="match status" value="1"/>
</dbReference>
<dbReference type="Pfam" id="PF02594">
    <property type="entry name" value="DUF167"/>
    <property type="match status" value="1"/>
</dbReference>
<dbReference type="SMART" id="SM01152">
    <property type="entry name" value="DUF167"/>
    <property type="match status" value="1"/>
</dbReference>
<dbReference type="SUPFAM" id="SSF69786">
    <property type="entry name" value="YggU-like"/>
    <property type="match status" value="1"/>
</dbReference>
<organism>
    <name type="scientific">Chlamydia muridarum (strain MoPn / Nigg)</name>
    <dbReference type="NCBI Taxonomy" id="243161"/>
    <lineage>
        <taxon>Bacteria</taxon>
        <taxon>Pseudomonadati</taxon>
        <taxon>Chlamydiota</taxon>
        <taxon>Chlamydiia</taxon>
        <taxon>Chlamydiales</taxon>
        <taxon>Chlamydiaceae</taxon>
        <taxon>Chlamydia/Chlamydophila group</taxon>
        <taxon>Chlamydia</taxon>
    </lineage>
</organism>
<gene>
    <name type="ordered locus">TC_0667</name>
</gene>